<sequence length="118" mass="13262">MIVGHGIDLQEISAIEKVYQRNPRFAQKILTEQELAIFESFPYKRRLSYLAGRWSGKEAFAKAIGTGIGRLTFQDIEILNDVRGCPILTKSPFKGNSFISISHSGNYVQASVILEDKK</sequence>
<proteinExistence type="inferred from homology"/>
<feature type="chain" id="PRO_0000175717" description="Holo-[acyl-carrier-protein] synthase">
    <location>
        <begin position="1"/>
        <end position="118"/>
    </location>
</feature>
<feature type="binding site" evidence="1">
    <location>
        <position position="8"/>
    </location>
    <ligand>
        <name>Mg(2+)</name>
        <dbReference type="ChEBI" id="CHEBI:18420"/>
    </ligand>
</feature>
<feature type="binding site" evidence="1">
    <location>
        <position position="58"/>
    </location>
    <ligand>
        <name>Mg(2+)</name>
        <dbReference type="ChEBI" id="CHEBI:18420"/>
    </ligand>
</feature>
<name>ACPS_STRP6</name>
<dbReference type="EC" id="2.7.8.7" evidence="1"/>
<dbReference type="EMBL" id="CP000003">
    <property type="protein sequence ID" value="AAT87660.1"/>
    <property type="molecule type" value="Genomic_DNA"/>
</dbReference>
<dbReference type="RefSeq" id="WP_002983199.1">
    <property type="nucleotide sequence ID" value="NC_006086.1"/>
</dbReference>
<dbReference type="SMR" id="Q5XAA3"/>
<dbReference type="GeneID" id="69900361"/>
<dbReference type="KEGG" id="spa:M6_Spy1525"/>
<dbReference type="HOGENOM" id="CLU_089696_1_2_9"/>
<dbReference type="Proteomes" id="UP000001167">
    <property type="component" value="Chromosome"/>
</dbReference>
<dbReference type="GO" id="GO:0005737">
    <property type="term" value="C:cytoplasm"/>
    <property type="evidence" value="ECO:0007669"/>
    <property type="project" value="UniProtKB-SubCell"/>
</dbReference>
<dbReference type="GO" id="GO:0008897">
    <property type="term" value="F:holo-[acyl-carrier-protein] synthase activity"/>
    <property type="evidence" value="ECO:0007669"/>
    <property type="project" value="UniProtKB-UniRule"/>
</dbReference>
<dbReference type="GO" id="GO:0000287">
    <property type="term" value="F:magnesium ion binding"/>
    <property type="evidence" value="ECO:0007669"/>
    <property type="project" value="UniProtKB-UniRule"/>
</dbReference>
<dbReference type="GO" id="GO:0006633">
    <property type="term" value="P:fatty acid biosynthetic process"/>
    <property type="evidence" value="ECO:0007669"/>
    <property type="project" value="UniProtKB-UniRule"/>
</dbReference>
<dbReference type="Gene3D" id="3.90.470.20">
    <property type="entry name" value="4'-phosphopantetheinyl transferase domain"/>
    <property type="match status" value="1"/>
</dbReference>
<dbReference type="HAMAP" id="MF_00101">
    <property type="entry name" value="AcpS"/>
    <property type="match status" value="1"/>
</dbReference>
<dbReference type="InterPro" id="IPR008278">
    <property type="entry name" value="4-PPantetheinyl_Trfase_dom"/>
</dbReference>
<dbReference type="InterPro" id="IPR037143">
    <property type="entry name" value="4-PPantetheinyl_Trfase_dom_sf"/>
</dbReference>
<dbReference type="InterPro" id="IPR002582">
    <property type="entry name" value="ACPS"/>
</dbReference>
<dbReference type="InterPro" id="IPR004568">
    <property type="entry name" value="Ppantetheine-prot_Trfase_dom"/>
</dbReference>
<dbReference type="NCBIfam" id="TIGR00516">
    <property type="entry name" value="acpS"/>
    <property type="match status" value="1"/>
</dbReference>
<dbReference type="NCBIfam" id="TIGR00556">
    <property type="entry name" value="pantethn_trn"/>
    <property type="match status" value="1"/>
</dbReference>
<dbReference type="Pfam" id="PF01648">
    <property type="entry name" value="ACPS"/>
    <property type="match status" value="1"/>
</dbReference>
<dbReference type="SUPFAM" id="SSF56214">
    <property type="entry name" value="4'-phosphopantetheinyl transferase"/>
    <property type="match status" value="1"/>
</dbReference>
<keyword id="KW-0963">Cytoplasm</keyword>
<keyword id="KW-0275">Fatty acid biosynthesis</keyword>
<keyword id="KW-0276">Fatty acid metabolism</keyword>
<keyword id="KW-0444">Lipid biosynthesis</keyword>
<keyword id="KW-0443">Lipid metabolism</keyword>
<keyword id="KW-0460">Magnesium</keyword>
<keyword id="KW-0479">Metal-binding</keyword>
<keyword id="KW-0808">Transferase</keyword>
<protein>
    <recommendedName>
        <fullName evidence="1">Holo-[acyl-carrier-protein] synthase</fullName>
        <shortName evidence="1">Holo-ACP synthase</shortName>
        <ecNumber evidence="1">2.7.8.7</ecNumber>
    </recommendedName>
    <alternativeName>
        <fullName evidence="1">4'-phosphopantetheinyl transferase AcpS</fullName>
    </alternativeName>
</protein>
<evidence type="ECO:0000255" key="1">
    <source>
        <dbReference type="HAMAP-Rule" id="MF_00101"/>
    </source>
</evidence>
<gene>
    <name evidence="1" type="primary">acpS</name>
    <name type="ordered locus">M6_Spy1525</name>
</gene>
<comment type="function">
    <text evidence="1">Transfers the 4'-phosphopantetheine moiety from coenzyme A to a Ser of acyl-carrier-protein.</text>
</comment>
<comment type="catalytic activity">
    <reaction evidence="1">
        <text>apo-[ACP] + CoA = holo-[ACP] + adenosine 3',5'-bisphosphate + H(+)</text>
        <dbReference type="Rhea" id="RHEA:12068"/>
        <dbReference type="Rhea" id="RHEA-COMP:9685"/>
        <dbReference type="Rhea" id="RHEA-COMP:9690"/>
        <dbReference type="ChEBI" id="CHEBI:15378"/>
        <dbReference type="ChEBI" id="CHEBI:29999"/>
        <dbReference type="ChEBI" id="CHEBI:57287"/>
        <dbReference type="ChEBI" id="CHEBI:58343"/>
        <dbReference type="ChEBI" id="CHEBI:64479"/>
        <dbReference type="EC" id="2.7.8.7"/>
    </reaction>
</comment>
<comment type="cofactor">
    <cofactor evidence="1">
        <name>Mg(2+)</name>
        <dbReference type="ChEBI" id="CHEBI:18420"/>
    </cofactor>
</comment>
<comment type="subcellular location">
    <subcellularLocation>
        <location evidence="1">Cytoplasm</location>
    </subcellularLocation>
</comment>
<comment type="similarity">
    <text evidence="1">Belongs to the P-Pant transferase superfamily. AcpS family.</text>
</comment>
<organism>
    <name type="scientific">Streptococcus pyogenes serotype M6 (strain ATCC BAA-946 / MGAS10394)</name>
    <dbReference type="NCBI Taxonomy" id="286636"/>
    <lineage>
        <taxon>Bacteria</taxon>
        <taxon>Bacillati</taxon>
        <taxon>Bacillota</taxon>
        <taxon>Bacilli</taxon>
        <taxon>Lactobacillales</taxon>
        <taxon>Streptococcaceae</taxon>
        <taxon>Streptococcus</taxon>
    </lineage>
</organism>
<reference key="1">
    <citation type="journal article" date="2004" name="J. Infect. Dis.">
        <title>Progress toward characterization of the group A Streptococcus metagenome: complete genome sequence of a macrolide-resistant serotype M6 strain.</title>
        <authorList>
            <person name="Banks D.J."/>
            <person name="Porcella S.F."/>
            <person name="Barbian K.D."/>
            <person name="Beres S.B."/>
            <person name="Philips L.E."/>
            <person name="Voyich J.M."/>
            <person name="DeLeo F.R."/>
            <person name="Martin J.M."/>
            <person name="Somerville G.A."/>
            <person name="Musser J.M."/>
        </authorList>
    </citation>
    <scope>NUCLEOTIDE SEQUENCE [LARGE SCALE GENOMIC DNA]</scope>
    <source>
        <strain>ATCC BAA-946 / MGAS10394</strain>
    </source>
</reference>
<accession>Q5XAA3</accession>